<dbReference type="EC" id="4.2.3.5" evidence="1"/>
<dbReference type="EMBL" id="CP000036">
    <property type="protein sequence ID" value="ABB66929.1"/>
    <property type="molecule type" value="Genomic_DNA"/>
</dbReference>
<dbReference type="RefSeq" id="WP_000918449.1">
    <property type="nucleotide sequence ID" value="NC_007613.1"/>
</dbReference>
<dbReference type="SMR" id="Q31YC9"/>
<dbReference type="KEGG" id="sbo:SBO_2366"/>
<dbReference type="HOGENOM" id="CLU_034547_0_2_6"/>
<dbReference type="UniPathway" id="UPA00053">
    <property type="reaction ID" value="UER00090"/>
</dbReference>
<dbReference type="Proteomes" id="UP000007067">
    <property type="component" value="Chromosome"/>
</dbReference>
<dbReference type="GO" id="GO:0005829">
    <property type="term" value="C:cytosol"/>
    <property type="evidence" value="ECO:0007669"/>
    <property type="project" value="TreeGrafter"/>
</dbReference>
<dbReference type="GO" id="GO:0004107">
    <property type="term" value="F:chorismate synthase activity"/>
    <property type="evidence" value="ECO:0007669"/>
    <property type="project" value="UniProtKB-UniRule"/>
</dbReference>
<dbReference type="GO" id="GO:0010181">
    <property type="term" value="F:FMN binding"/>
    <property type="evidence" value="ECO:0007669"/>
    <property type="project" value="TreeGrafter"/>
</dbReference>
<dbReference type="GO" id="GO:0008652">
    <property type="term" value="P:amino acid biosynthetic process"/>
    <property type="evidence" value="ECO:0007669"/>
    <property type="project" value="UniProtKB-KW"/>
</dbReference>
<dbReference type="GO" id="GO:0009073">
    <property type="term" value="P:aromatic amino acid family biosynthetic process"/>
    <property type="evidence" value="ECO:0007669"/>
    <property type="project" value="UniProtKB-KW"/>
</dbReference>
<dbReference type="GO" id="GO:0009423">
    <property type="term" value="P:chorismate biosynthetic process"/>
    <property type="evidence" value="ECO:0007669"/>
    <property type="project" value="UniProtKB-UniRule"/>
</dbReference>
<dbReference type="CDD" id="cd07304">
    <property type="entry name" value="Chorismate_synthase"/>
    <property type="match status" value="1"/>
</dbReference>
<dbReference type="FunFam" id="3.60.150.10:FF:000001">
    <property type="entry name" value="Chorismate synthase"/>
    <property type="match status" value="1"/>
</dbReference>
<dbReference type="Gene3D" id="3.60.150.10">
    <property type="entry name" value="Chorismate synthase AroC"/>
    <property type="match status" value="1"/>
</dbReference>
<dbReference type="HAMAP" id="MF_00300">
    <property type="entry name" value="Chorismate_synth"/>
    <property type="match status" value="1"/>
</dbReference>
<dbReference type="InterPro" id="IPR000453">
    <property type="entry name" value="Chorismate_synth"/>
</dbReference>
<dbReference type="InterPro" id="IPR035904">
    <property type="entry name" value="Chorismate_synth_AroC_sf"/>
</dbReference>
<dbReference type="InterPro" id="IPR020541">
    <property type="entry name" value="Chorismate_synthase_CS"/>
</dbReference>
<dbReference type="NCBIfam" id="TIGR00033">
    <property type="entry name" value="aroC"/>
    <property type="match status" value="1"/>
</dbReference>
<dbReference type="NCBIfam" id="NF003793">
    <property type="entry name" value="PRK05382.1"/>
    <property type="match status" value="1"/>
</dbReference>
<dbReference type="PANTHER" id="PTHR21085">
    <property type="entry name" value="CHORISMATE SYNTHASE"/>
    <property type="match status" value="1"/>
</dbReference>
<dbReference type="PANTHER" id="PTHR21085:SF0">
    <property type="entry name" value="CHORISMATE SYNTHASE"/>
    <property type="match status" value="1"/>
</dbReference>
<dbReference type="Pfam" id="PF01264">
    <property type="entry name" value="Chorismate_synt"/>
    <property type="match status" value="1"/>
</dbReference>
<dbReference type="PIRSF" id="PIRSF001456">
    <property type="entry name" value="Chorismate_synth"/>
    <property type="match status" value="1"/>
</dbReference>
<dbReference type="SUPFAM" id="SSF103263">
    <property type="entry name" value="Chorismate synthase, AroC"/>
    <property type="match status" value="1"/>
</dbReference>
<dbReference type="PROSITE" id="PS00787">
    <property type="entry name" value="CHORISMATE_SYNTHASE_1"/>
    <property type="match status" value="1"/>
</dbReference>
<dbReference type="PROSITE" id="PS00788">
    <property type="entry name" value="CHORISMATE_SYNTHASE_2"/>
    <property type="match status" value="1"/>
</dbReference>
<dbReference type="PROSITE" id="PS00789">
    <property type="entry name" value="CHORISMATE_SYNTHASE_3"/>
    <property type="match status" value="1"/>
</dbReference>
<sequence>MAGNTIGQLFRVTTFGESHGLALGCIVDGVPPGILLTEADLQHDLDRRRPGTSRYTTQRREPDQVKILSGVFEGVTTGTSIGLLIENTDQRSQDYSAIKDVFRPGHADYTYEQKYGLRDYRGGGRSSARETAMRVAAGAIAKKYLAEKFGIEIRGCLTQMGDIPLEIKDWSLVEQNPFFCPDPDKIDALDELMRALKKEGDSIGAKVTVVASGVPAGLGEPVFDRLDADIAHALMSINAVKGVEIGDGFDVVALRGSQNRDEITKDGFQSNHAGGILGGISSGQQIIAHMALKPTSSITVPGRTINRFGEEVEMITKGRHDPCVGIRAVPIAEAMLAIVLMDHLLRQRAQNADVKTDIPRW</sequence>
<reference key="1">
    <citation type="journal article" date="2005" name="Nucleic Acids Res.">
        <title>Genome dynamics and diversity of Shigella species, the etiologic agents of bacillary dysentery.</title>
        <authorList>
            <person name="Yang F."/>
            <person name="Yang J."/>
            <person name="Zhang X."/>
            <person name="Chen L."/>
            <person name="Jiang Y."/>
            <person name="Yan Y."/>
            <person name="Tang X."/>
            <person name="Wang J."/>
            <person name="Xiong Z."/>
            <person name="Dong J."/>
            <person name="Xue Y."/>
            <person name="Zhu Y."/>
            <person name="Xu X."/>
            <person name="Sun L."/>
            <person name="Chen S."/>
            <person name="Nie H."/>
            <person name="Peng J."/>
            <person name="Xu J."/>
            <person name="Wang Y."/>
            <person name="Yuan Z."/>
            <person name="Wen Y."/>
            <person name="Yao Z."/>
            <person name="Shen Y."/>
            <person name="Qiang B."/>
            <person name="Hou Y."/>
            <person name="Yu J."/>
            <person name="Jin Q."/>
        </authorList>
    </citation>
    <scope>NUCLEOTIDE SEQUENCE [LARGE SCALE GENOMIC DNA]</scope>
    <source>
        <strain>Sb227</strain>
    </source>
</reference>
<comment type="function">
    <text evidence="1">Catalyzes the anti-1,4-elimination of the C-3 phosphate and the C-6 proR hydrogen from 5-enolpyruvylshikimate-3-phosphate (EPSP) to yield chorismate, which is the branch point compound that serves as the starting substrate for the three terminal pathways of aromatic amino acid biosynthesis. This reaction introduces a second double bond into the aromatic ring system.</text>
</comment>
<comment type="catalytic activity">
    <reaction evidence="1">
        <text>5-O-(1-carboxyvinyl)-3-phosphoshikimate = chorismate + phosphate</text>
        <dbReference type="Rhea" id="RHEA:21020"/>
        <dbReference type="ChEBI" id="CHEBI:29748"/>
        <dbReference type="ChEBI" id="CHEBI:43474"/>
        <dbReference type="ChEBI" id="CHEBI:57701"/>
        <dbReference type="EC" id="4.2.3.5"/>
    </reaction>
</comment>
<comment type="cofactor">
    <cofactor evidence="1">
        <name>FMNH2</name>
        <dbReference type="ChEBI" id="CHEBI:57618"/>
    </cofactor>
    <text evidence="1">Reduced FMN (FMNH(2)).</text>
</comment>
<comment type="pathway">
    <text evidence="1">Metabolic intermediate biosynthesis; chorismate biosynthesis; chorismate from D-erythrose 4-phosphate and phosphoenolpyruvate: step 7/7.</text>
</comment>
<comment type="subunit">
    <text evidence="1">Homotetramer.</text>
</comment>
<comment type="similarity">
    <text evidence="1">Belongs to the chorismate synthase family.</text>
</comment>
<proteinExistence type="inferred from homology"/>
<name>AROC_SHIBS</name>
<protein>
    <recommendedName>
        <fullName evidence="1">Chorismate synthase</fullName>
        <shortName evidence="1">CS</shortName>
        <ecNumber evidence="1">4.2.3.5</ecNumber>
    </recommendedName>
    <alternativeName>
        <fullName evidence="1">5-enolpyruvylshikimate-3-phosphate phospholyase</fullName>
    </alternativeName>
</protein>
<feature type="chain" id="PRO_0000256333" description="Chorismate synthase">
    <location>
        <begin position="1"/>
        <end position="361"/>
    </location>
</feature>
<feature type="binding site" evidence="1">
    <location>
        <position position="48"/>
    </location>
    <ligand>
        <name>NADP(+)</name>
        <dbReference type="ChEBI" id="CHEBI:58349"/>
    </ligand>
</feature>
<feature type="binding site" evidence="1">
    <location>
        <position position="54"/>
    </location>
    <ligand>
        <name>NADP(+)</name>
        <dbReference type="ChEBI" id="CHEBI:58349"/>
    </ligand>
</feature>
<feature type="binding site" evidence="1">
    <location>
        <begin position="125"/>
        <end position="127"/>
    </location>
    <ligand>
        <name>FMN</name>
        <dbReference type="ChEBI" id="CHEBI:58210"/>
    </ligand>
</feature>
<feature type="binding site" evidence="1">
    <location>
        <begin position="238"/>
        <end position="239"/>
    </location>
    <ligand>
        <name>FMN</name>
        <dbReference type="ChEBI" id="CHEBI:58210"/>
    </ligand>
</feature>
<feature type="binding site" evidence="1">
    <location>
        <position position="278"/>
    </location>
    <ligand>
        <name>FMN</name>
        <dbReference type="ChEBI" id="CHEBI:58210"/>
    </ligand>
</feature>
<feature type="binding site" evidence="1">
    <location>
        <begin position="293"/>
        <end position="297"/>
    </location>
    <ligand>
        <name>FMN</name>
        <dbReference type="ChEBI" id="CHEBI:58210"/>
    </ligand>
</feature>
<feature type="binding site" evidence="1">
    <location>
        <position position="319"/>
    </location>
    <ligand>
        <name>FMN</name>
        <dbReference type="ChEBI" id="CHEBI:58210"/>
    </ligand>
</feature>
<keyword id="KW-0028">Amino-acid biosynthesis</keyword>
<keyword id="KW-0057">Aromatic amino acid biosynthesis</keyword>
<keyword id="KW-0274">FAD</keyword>
<keyword id="KW-0285">Flavoprotein</keyword>
<keyword id="KW-0288">FMN</keyword>
<keyword id="KW-0456">Lyase</keyword>
<keyword id="KW-0521">NADP</keyword>
<gene>
    <name evidence="1" type="primary">aroC</name>
    <name type="ordered locus">SBO_2366</name>
</gene>
<organism>
    <name type="scientific">Shigella boydii serotype 4 (strain Sb227)</name>
    <dbReference type="NCBI Taxonomy" id="300268"/>
    <lineage>
        <taxon>Bacteria</taxon>
        <taxon>Pseudomonadati</taxon>
        <taxon>Pseudomonadota</taxon>
        <taxon>Gammaproteobacteria</taxon>
        <taxon>Enterobacterales</taxon>
        <taxon>Enterobacteriaceae</taxon>
        <taxon>Shigella</taxon>
    </lineage>
</organism>
<accession>Q31YC9</accession>
<evidence type="ECO:0000255" key="1">
    <source>
        <dbReference type="HAMAP-Rule" id="MF_00300"/>
    </source>
</evidence>